<organism>
    <name type="scientific">Nymphaea alba</name>
    <name type="common">White water-lily</name>
    <name type="synonym">Castalia alba</name>
    <dbReference type="NCBI Taxonomy" id="34301"/>
    <lineage>
        <taxon>Eukaryota</taxon>
        <taxon>Viridiplantae</taxon>
        <taxon>Streptophyta</taxon>
        <taxon>Embryophyta</taxon>
        <taxon>Tracheophyta</taxon>
        <taxon>Spermatophyta</taxon>
        <taxon>Magnoliopsida</taxon>
        <taxon>Nymphaeales</taxon>
        <taxon>Nymphaeaceae</taxon>
        <taxon>Nymphaea</taxon>
    </lineage>
</organism>
<name>NU1C_NYMAL</name>
<geneLocation type="chloroplast"/>
<keyword id="KW-0150">Chloroplast</keyword>
<keyword id="KW-0472">Membrane</keyword>
<keyword id="KW-0520">NAD</keyword>
<keyword id="KW-0521">NADP</keyword>
<keyword id="KW-0934">Plastid</keyword>
<keyword id="KW-0618">Plastoquinone</keyword>
<keyword id="KW-0874">Quinone</keyword>
<keyword id="KW-0793">Thylakoid</keyword>
<keyword id="KW-1278">Translocase</keyword>
<keyword id="KW-0812">Transmembrane</keyword>
<keyword id="KW-1133">Transmembrane helix</keyword>
<proteinExistence type="inferred from homology"/>
<dbReference type="EC" id="7.1.1.-" evidence="1"/>
<dbReference type="EMBL" id="AJ627251">
    <property type="protein sequence ID" value="CAF28651.1"/>
    <property type="molecule type" value="Genomic_DNA"/>
</dbReference>
<dbReference type="RefSeq" id="YP_053211.1">
    <property type="nucleotide sequence ID" value="NC_006050.1"/>
</dbReference>
<dbReference type="SMR" id="Q6EVZ5"/>
<dbReference type="GeneID" id="2896158"/>
<dbReference type="GO" id="GO:0009535">
    <property type="term" value="C:chloroplast thylakoid membrane"/>
    <property type="evidence" value="ECO:0007669"/>
    <property type="project" value="UniProtKB-SubCell"/>
</dbReference>
<dbReference type="GO" id="GO:0003954">
    <property type="term" value="F:NADH dehydrogenase activity"/>
    <property type="evidence" value="ECO:0007669"/>
    <property type="project" value="TreeGrafter"/>
</dbReference>
<dbReference type="GO" id="GO:0016655">
    <property type="term" value="F:oxidoreductase activity, acting on NAD(P)H, quinone or similar compound as acceptor"/>
    <property type="evidence" value="ECO:0007669"/>
    <property type="project" value="UniProtKB-UniRule"/>
</dbReference>
<dbReference type="GO" id="GO:0048038">
    <property type="term" value="F:quinone binding"/>
    <property type="evidence" value="ECO:0007669"/>
    <property type="project" value="UniProtKB-KW"/>
</dbReference>
<dbReference type="GO" id="GO:0009060">
    <property type="term" value="P:aerobic respiration"/>
    <property type="evidence" value="ECO:0007669"/>
    <property type="project" value="TreeGrafter"/>
</dbReference>
<dbReference type="GO" id="GO:0019684">
    <property type="term" value="P:photosynthesis, light reaction"/>
    <property type="evidence" value="ECO:0007669"/>
    <property type="project" value="UniProtKB-UniRule"/>
</dbReference>
<dbReference type="HAMAP" id="MF_01350">
    <property type="entry name" value="NDH1_NuoH"/>
    <property type="match status" value="1"/>
</dbReference>
<dbReference type="InterPro" id="IPR001694">
    <property type="entry name" value="NADH_UbQ_OxRdtase_su1/FPO"/>
</dbReference>
<dbReference type="InterPro" id="IPR018086">
    <property type="entry name" value="NADH_UbQ_OxRdtase_su1_CS"/>
</dbReference>
<dbReference type="NCBIfam" id="NF004741">
    <property type="entry name" value="PRK06076.1-2"/>
    <property type="match status" value="1"/>
</dbReference>
<dbReference type="PANTHER" id="PTHR11432">
    <property type="entry name" value="NADH DEHYDROGENASE SUBUNIT 1"/>
    <property type="match status" value="1"/>
</dbReference>
<dbReference type="PANTHER" id="PTHR11432:SF3">
    <property type="entry name" value="NADH-UBIQUINONE OXIDOREDUCTASE CHAIN 1"/>
    <property type="match status" value="1"/>
</dbReference>
<dbReference type="Pfam" id="PF00146">
    <property type="entry name" value="NADHdh"/>
    <property type="match status" value="1"/>
</dbReference>
<dbReference type="PROSITE" id="PS00667">
    <property type="entry name" value="COMPLEX1_ND1_1"/>
    <property type="match status" value="1"/>
</dbReference>
<dbReference type="PROSITE" id="PS00668">
    <property type="entry name" value="COMPLEX1_ND1_2"/>
    <property type="match status" value="1"/>
</dbReference>
<accession>Q6EVZ5</accession>
<gene>
    <name evidence="1" type="primary">ndhA</name>
</gene>
<comment type="function">
    <text evidence="1">NDH shuttles electrons from NAD(P)H:plastoquinone, via FMN and iron-sulfur (Fe-S) centers, to quinones in the photosynthetic chain and possibly in a chloroplast respiratory chain. The immediate electron acceptor for the enzyme in this species is believed to be plastoquinone. Couples the redox reaction to proton translocation, and thus conserves the redox energy in a proton gradient.</text>
</comment>
<comment type="catalytic activity">
    <reaction evidence="1">
        <text>a plastoquinone + NADH + (n+1) H(+)(in) = a plastoquinol + NAD(+) + n H(+)(out)</text>
        <dbReference type="Rhea" id="RHEA:42608"/>
        <dbReference type="Rhea" id="RHEA-COMP:9561"/>
        <dbReference type="Rhea" id="RHEA-COMP:9562"/>
        <dbReference type="ChEBI" id="CHEBI:15378"/>
        <dbReference type="ChEBI" id="CHEBI:17757"/>
        <dbReference type="ChEBI" id="CHEBI:57540"/>
        <dbReference type="ChEBI" id="CHEBI:57945"/>
        <dbReference type="ChEBI" id="CHEBI:62192"/>
    </reaction>
</comment>
<comment type="catalytic activity">
    <reaction evidence="1">
        <text>a plastoquinone + NADPH + (n+1) H(+)(in) = a plastoquinol + NADP(+) + n H(+)(out)</text>
        <dbReference type="Rhea" id="RHEA:42612"/>
        <dbReference type="Rhea" id="RHEA-COMP:9561"/>
        <dbReference type="Rhea" id="RHEA-COMP:9562"/>
        <dbReference type="ChEBI" id="CHEBI:15378"/>
        <dbReference type="ChEBI" id="CHEBI:17757"/>
        <dbReference type="ChEBI" id="CHEBI:57783"/>
        <dbReference type="ChEBI" id="CHEBI:58349"/>
        <dbReference type="ChEBI" id="CHEBI:62192"/>
    </reaction>
</comment>
<comment type="subunit">
    <text evidence="1">NDH is composed of at least 16 different subunits, 5 of which are encoded in the nucleus.</text>
</comment>
<comment type="subcellular location">
    <subcellularLocation>
        <location evidence="1">Plastid</location>
        <location evidence="1">Chloroplast thylakoid membrane</location>
        <topology evidence="1">Multi-pass membrane protein</topology>
    </subcellularLocation>
</comment>
<comment type="similarity">
    <text evidence="1">Belongs to the complex I subunit 1 family.</text>
</comment>
<evidence type="ECO:0000255" key="1">
    <source>
        <dbReference type="HAMAP-Rule" id="MF_01350"/>
    </source>
</evidence>
<protein>
    <recommendedName>
        <fullName evidence="1">NAD(P)H-quinone oxidoreductase subunit 1, chloroplastic</fullName>
        <ecNumber evidence="1">7.1.1.-</ecNumber>
    </recommendedName>
    <alternativeName>
        <fullName evidence="1">NAD(P)H dehydrogenase subunit 1</fullName>
        <shortName evidence="1">NDH subunit 1</shortName>
    </alternativeName>
    <alternativeName>
        <fullName evidence="1">NADH-plastoquinone oxidoreductase subunit 1</fullName>
    </alternativeName>
</protein>
<feature type="chain" id="PRO_0000240028" description="NAD(P)H-quinone oxidoreductase subunit 1, chloroplastic">
    <location>
        <begin position="1"/>
        <end position="361"/>
    </location>
</feature>
<feature type="transmembrane region" description="Helical" evidence="1">
    <location>
        <begin position="25"/>
        <end position="45"/>
    </location>
</feature>
<feature type="transmembrane region" description="Helical" evidence="1">
    <location>
        <begin position="102"/>
        <end position="122"/>
    </location>
</feature>
<feature type="transmembrane region" description="Helical" evidence="1">
    <location>
        <begin position="125"/>
        <end position="145"/>
    </location>
</feature>
<feature type="transmembrane region" description="Helical" evidence="1">
    <location>
        <begin position="246"/>
        <end position="266"/>
    </location>
</feature>
<feature type="transmembrane region" description="Helical" evidence="1">
    <location>
        <begin position="298"/>
        <end position="318"/>
    </location>
</feature>
<feature type="transmembrane region" description="Helical" evidence="1">
    <location>
        <begin position="334"/>
        <end position="354"/>
    </location>
</feature>
<reference key="1">
    <citation type="journal article" date="2004" name="Mol. Biol. Evol.">
        <title>The chloroplast genome of Nymphaea alba: whole-genome analyses and the problem of identifying the most basal angiosperm.</title>
        <authorList>
            <person name="Goremykin V.V."/>
            <person name="Hirsch-Ernst K.I."/>
            <person name="Woelfl S."/>
            <person name="Hellwig F.H."/>
        </authorList>
    </citation>
    <scope>NUCLEOTIDE SEQUENCE [LARGE SCALE GENOMIC DNA]</scope>
</reference>
<sequence>MIIEEAQAINSFFRSESSKEVYGLIWLLVPILTLVLGITIGVLVIVWLERKISAGIQRRIGPEYAGPLGILQALADGVKLLFKEDLLPSRGDIRLFSVGPSVAVVSILLSYSVIPFGYHLVLTDLSIGVFLWIAISSIAPIGLLMSGYGSNNKYSFSGGLRAAAQSISYEIPLTPCVLSISLLSNSSSTVDIVEAQSKYGFWGWNLWRQPIGFLVFIISSLAECERLPFDLPEAEEELVAGYQTEYSGIKFGLFYVASYLNLLVSSLFVTVLYLGGWNLPIPYIPITELFEINKTSEVFGTTISLLITLAKAYLFLFIPISTRWTLPRLRMDQLLNLGWKSLLPIALGNLLLTTSSQLVSL</sequence>